<organism>
    <name type="scientific">Leifsonia xyli subsp. xyli (strain CTCB07)</name>
    <dbReference type="NCBI Taxonomy" id="281090"/>
    <lineage>
        <taxon>Bacteria</taxon>
        <taxon>Bacillati</taxon>
        <taxon>Actinomycetota</taxon>
        <taxon>Actinomycetes</taxon>
        <taxon>Micrococcales</taxon>
        <taxon>Microbacteriaceae</taxon>
        <taxon>Leifsonia</taxon>
    </lineage>
</organism>
<protein>
    <recommendedName>
        <fullName evidence="2">tRNA (guanine-N(7)-)-methyltransferase</fullName>
        <ecNumber evidence="2">2.1.1.33</ecNumber>
    </recommendedName>
    <alternativeName>
        <fullName evidence="2">tRNA (guanine(46)-N(7))-methyltransferase</fullName>
    </alternativeName>
    <alternativeName>
        <fullName evidence="2">tRNA(m7G46)-methyltransferase</fullName>
    </alternativeName>
</protein>
<sequence>MEPAPLVRPRSYVVRGRKTDAQQRAIAEFWPAFGVDFAGGLLDLDALFGRTAPRTVEIGFGNGENLLALAERHPERDFLGVEVHGAGVGRVFAAMRERGLSNIRVIRHDAVEVFETGLSAGSVAEALLFFPDPWPKARHHRRRLVQPDVVRLLARALAADGVLRLATDWEPYADHMLAVLDAEPVLVNVAGPGAFIPRPEARPVTKFERRGEKLGHSIFDLEYRPLP</sequence>
<dbReference type="EC" id="2.1.1.33" evidence="2"/>
<dbReference type="EMBL" id="AE016822">
    <property type="protein sequence ID" value="AAT88785.1"/>
    <property type="molecule type" value="Genomic_DNA"/>
</dbReference>
<dbReference type="RefSeq" id="WP_011185783.1">
    <property type="nucleotide sequence ID" value="NC_006087.1"/>
</dbReference>
<dbReference type="SMR" id="Q6AFR0"/>
<dbReference type="STRING" id="281090.Lxx08920"/>
<dbReference type="KEGG" id="lxx:Lxx08920"/>
<dbReference type="eggNOG" id="COG0220">
    <property type="taxonomic scope" value="Bacteria"/>
</dbReference>
<dbReference type="HOGENOM" id="CLU_050910_0_1_11"/>
<dbReference type="UniPathway" id="UPA00989"/>
<dbReference type="Proteomes" id="UP000001306">
    <property type="component" value="Chromosome"/>
</dbReference>
<dbReference type="GO" id="GO:0043527">
    <property type="term" value="C:tRNA methyltransferase complex"/>
    <property type="evidence" value="ECO:0007669"/>
    <property type="project" value="TreeGrafter"/>
</dbReference>
<dbReference type="GO" id="GO:0008176">
    <property type="term" value="F:tRNA (guanine(46)-N7)-methyltransferase activity"/>
    <property type="evidence" value="ECO:0007669"/>
    <property type="project" value="UniProtKB-UniRule"/>
</dbReference>
<dbReference type="Gene3D" id="3.40.50.150">
    <property type="entry name" value="Vaccinia Virus protein VP39"/>
    <property type="match status" value="1"/>
</dbReference>
<dbReference type="HAMAP" id="MF_01057">
    <property type="entry name" value="tRNA_methyltr_TrmB"/>
    <property type="match status" value="1"/>
</dbReference>
<dbReference type="InterPro" id="IPR029063">
    <property type="entry name" value="SAM-dependent_MTases_sf"/>
</dbReference>
<dbReference type="InterPro" id="IPR003358">
    <property type="entry name" value="tRNA_(Gua-N-7)_MeTrfase_Trmb"/>
</dbReference>
<dbReference type="InterPro" id="IPR055361">
    <property type="entry name" value="tRNA_methyltr_TrmB_bact"/>
</dbReference>
<dbReference type="NCBIfam" id="TIGR00091">
    <property type="entry name" value="tRNA (guanosine(46)-N7)-methyltransferase TrmB"/>
    <property type="match status" value="1"/>
</dbReference>
<dbReference type="PANTHER" id="PTHR23417">
    <property type="entry name" value="3-DEOXY-D-MANNO-OCTULOSONIC-ACID TRANSFERASE/TRNA GUANINE-N 7 - -METHYLTRANSFERASE"/>
    <property type="match status" value="1"/>
</dbReference>
<dbReference type="PANTHER" id="PTHR23417:SF14">
    <property type="entry name" value="PENTACOTRIPEPTIDE-REPEAT REGION OF PRORP DOMAIN-CONTAINING PROTEIN"/>
    <property type="match status" value="1"/>
</dbReference>
<dbReference type="Pfam" id="PF02390">
    <property type="entry name" value="Methyltransf_4"/>
    <property type="match status" value="1"/>
</dbReference>
<dbReference type="SUPFAM" id="SSF53335">
    <property type="entry name" value="S-adenosyl-L-methionine-dependent methyltransferases"/>
    <property type="match status" value="1"/>
</dbReference>
<dbReference type="PROSITE" id="PS51625">
    <property type="entry name" value="SAM_MT_TRMB"/>
    <property type="match status" value="1"/>
</dbReference>
<keyword id="KW-0489">Methyltransferase</keyword>
<keyword id="KW-1185">Reference proteome</keyword>
<keyword id="KW-0949">S-adenosyl-L-methionine</keyword>
<keyword id="KW-0808">Transferase</keyword>
<keyword id="KW-0819">tRNA processing</keyword>
<name>TRMB_LEIXX</name>
<evidence type="ECO:0000250" key="1"/>
<evidence type="ECO:0000255" key="2">
    <source>
        <dbReference type="HAMAP-Rule" id="MF_01057"/>
    </source>
</evidence>
<gene>
    <name evidence="2" type="primary">trmB</name>
    <name type="ordered locus">Lxx08920</name>
</gene>
<accession>Q6AFR0</accession>
<proteinExistence type="inferred from homology"/>
<feature type="chain" id="PRO_0000171340" description="tRNA (guanine-N(7)-)-methyltransferase">
    <location>
        <begin position="1"/>
        <end position="227"/>
    </location>
</feature>
<feature type="active site" evidence="1">
    <location>
        <position position="132"/>
    </location>
</feature>
<feature type="binding site" evidence="2">
    <location>
        <position position="57"/>
    </location>
    <ligand>
        <name>S-adenosyl-L-methionine</name>
        <dbReference type="ChEBI" id="CHEBI:59789"/>
    </ligand>
</feature>
<feature type="binding site" evidence="2">
    <location>
        <position position="82"/>
    </location>
    <ligand>
        <name>S-adenosyl-L-methionine</name>
        <dbReference type="ChEBI" id="CHEBI:59789"/>
    </ligand>
</feature>
<feature type="binding site" evidence="2">
    <location>
        <position position="109"/>
    </location>
    <ligand>
        <name>S-adenosyl-L-methionine</name>
        <dbReference type="ChEBI" id="CHEBI:59789"/>
    </ligand>
</feature>
<feature type="binding site" evidence="2">
    <location>
        <position position="132"/>
    </location>
    <ligand>
        <name>S-adenosyl-L-methionine</name>
        <dbReference type="ChEBI" id="CHEBI:59789"/>
    </ligand>
</feature>
<feature type="binding site" evidence="2">
    <location>
        <position position="136"/>
    </location>
    <ligand>
        <name>substrate</name>
    </ligand>
</feature>
<feature type="binding site" evidence="2">
    <location>
        <position position="168"/>
    </location>
    <ligand>
        <name>substrate</name>
    </ligand>
</feature>
<feature type="binding site" evidence="2">
    <location>
        <begin position="205"/>
        <end position="208"/>
    </location>
    <ligand>
        <name>substrate</name>
    </ligand>
</feature>
<reference key="1">
    <citation type="journal article" date="2004" name="Mol. Plant Microbe Interact.">
        <title>The genome sequence of the Gram-positive sugarcane pathogen Leifsonia xyli subsp. xyli.</title>
        <authorList>
            <person name="Monteiro-Vitorello C.B."/>
            <person name="Camargo L.E.A."/>
            <person name="Van Sluys M.A."/>
            <person name="Kitajima J.P."/>
            <person name="Truffi D."/>
            <person name="do Amaral A.M."/>
            <person name="Harakava R."/>
            <person name="de Oliveira J.C.F."/>
            <person name="Wood D."/>
            <person name="de Oliveira M.C."/>
            <person name="Miyaki C.Y."/>
            <person name="Takita M.A."/>
            <person name="da Silva A.C.R."/>
            <person name="Furlan L.R."/>
            <person name="Carraro D.M."/>
            <person name="Camarotte G."/>
            <person name="Almeida N.F. Jr."/>
            <person name="Carrer H."/>
            <person name="Coutinho L.L."/>
            <person name="El-Dorry H.A."/>
            <person name="Ferro M.I.T."/>
            <person name="Gagliardi P.R."/>
            <person name="Giglioti E."/>
            <person name="Goldman M.H.S."/>
            <person name="Goldman G.H."/>
            <person name="Kimura E.T."/>
            <person name="Ferro E.S."/>
            <person name="Kuramae E.E."/>
            <person name="Lemos E.G.M."/>
            <person name="Lemos M.V.F."/>
            <person name="Mauro S.M.Z."/>
            <person name="Machado M.A."/>
            <person name="Marino C.L."/>
            <person name="Menck C.F."/>
            <person name="Nunes L.R."/>
            <person name="Oliveira R.C."/>
            <person name="Pereira G.G."/>
            <person name="Siqueira W."/>
            <person name="de Souza A.A."/>
            <person name="Tsai S.M."/>
            <person name="Zanca A.S."/>
            <person name="Simpson A.J.G."/>
            <person name="Brumbley S.M."/>
            <person name="Setubal J.C."/>
        </authorList>
    </citation>
    <scope>NUCLEOTIDE SEQUENCE [LARGE SCALE GENOMIC DNA]</scope>
    <source>
        <strain>CTCB07</strain>
    </source>
</reference>
<comment type="function">
    <text evidence="2">Catalyzes the formation of N(7)-methylguanine at position 46 (m7G46) in tRNA.</text>
</comment>
<comment type="catalytic activity">
    <reaction evidence="2">
        <text>guanosine(46) in tRNA + S-adenosyl-L-methionine = N(7)-methylguanosine(46) in tRNA + S-adenosyl-L-homocysteine</text>
        <dbReference type="Rhea" id="RHEA:42708"/>
        <dbReference type="Rhea" id="RHEA-COMP:10188"/>
        <dbReference type="Rhea" id="RHEA-COMP:10189"/>
        <dbReference type="ChEBI" id="CHEBI:57856"/>
        <dbReference type="ChEBI" id="CHEBI:59789"/>
        <dbReference type="ChEBI" id="CHEBI:74269"/>
        <dbReference type="ChEBI" id="CHEBI:74480"/>
        <dbReference type="EC" id="2.1.1.33"/>
    </reaction>
</comment>
<comment type="pathway">
    <text evidence="2">tRNA modification; N(7)-methylguanine-tRNA biosynthesis.</text>
</comment>
<comment type="similarity">
    <text evidence="2">Belongs to the class I-like SAM-binding methyltransferase superfamily. TrmB family.</text>
</comment>